<feature type="chain" id="PRO_1000212055" description="Adenosylhomocysteinase">
    <location>
        <begin position="1"/>
        <end position="477"/>
    </location>
</feature>
<feature type="binding site" evidence="1">
    <location>
        <position position="63"/>
    </location>
    <ligand>
        <name>substrate</name>
    </ligand>
</feature>
<feature type="binding site" evidence="1">
    <location>
        <position position="142"/>
    </location>
    <ligand>
        <name>substrate</name>
    </ligand>
</feature>
<feature type="binding site" evidence="1">
    <location>
        <position position="202"/>
    </location>
    <ligand>
        <name>substrate</name>
    </ligand>
</feature>
<feature type="binding site" evidence="1">
    <location>
        <begin position="203"/>
        <end position="205"/>
    </location>
    <ligand>
        <name>NAD(+)</name>
        <dbReference type="ChEBI" id="CHEBI:57540"/>
    </ligand>
</feature>
<feature type="binding site" evidence="1">
    <location>
        <position position="232"/>
    </location>
    <ligand>
        <name>substrate</name>
    </ligand>
</feature>
<feature type="binding site" evidence="1">
    <location>
        <position position="236"/>
    </location>
    <ligand>
        <name>substrate</name>
    </ligand>
</feature>
<feature type="binding site" evidence="1">
    <location>
        <position position="237"/>
    </location>
    <ligand>
        <name>NAD(+)</name>
        <dbReference type="ChEBI" id="CHEBI:57540"/>
    </ligand>
</feature>
<feature type="binding site" evidence="1">
    <location>
        <begin position="266"/>
        <end position="271"/>
    </location>
    <ligand>
        <name>NAD(+)</name>
        <dbReference type="ChEBI" id="CHEBI:57540"/>
    </ligand>
</feature>
<feature type="binding site" evidence="1">
    <location>
        <position position="289"/>
    </location>
    <ligand>
        <name>NAD(+)</name>
        <dbReference type="ChEBI" id="CHEBI:57540"/>
    </ligand>
</feature>
<feature type="binding site" evidence="1">
    <location>
        <position position="324"/>
    </location>
    <ligand>
        <name>NAD(+)</name>
        <dbReference type="ChEBI" id="CHEBI:57540"/>
    </ligand>
</feature>
<feature type="binding site" evidence="1">
    <location>
        <begin position="345"/>
        <end position="347"/>
    </location>
    <ligand>
        <name>NAD(+)</name>
        <dbReference type="ChEBI" id="CHEBI:57540"/>
    </ligand>
</feature>
<feature type="binding site" evidence="1">
    <location>
        <position position="390"/>
    </location>
    <ligand>
        <name>NAD(+)</name>
        <dbReference type="ChEBI" id="CHEBI:57540"/>
    </ligand>
</feature>
<keyword id="KW-0963">Cytoplasm</keyword>
<keyword id="KW-0378">Hydrolase</keyword>
<keyword id="KW-0520">NAD</keyword>
<keyword id="KW-0554">One-carbon metabolism</keyword>
<keyword id="KW-1185">Reference proteome</keyword>
<reference key="1">
    <citation type="submission" date="2008-03" db="EMBL/GenBank/DDBJ databases">
        <title>Complete sequence of Leptothrix cholodnii SP-6.</title>
        <authorList>
            <consortium name="US DOE Joint Genome Institute"/>
            <person name="Copeland A."/>
            <person name="Lucas S."/>
            <person name="Lapidus A."/>
            <person name="Glavina del Rio T."/>
            <person name="Dalin E."/>
            <person name="Tice H."/>
            <person name="Bruce D."/>
            <person name="Goodwin L."/>
            <person name="Pitluck S."/>
            <person name="Chertkov O."/>
            <person name="Brettin T."/>
            <person name="Detter J.C."/>
            <person name="Han C."/>
            <person name="Kuske C.R."/>
            <person name="Schmutz J."/>
            <person name="Larimer F."/>
            <person name="Land M."/>
            <person name="Hauser L."/>
            <person name="Kyrpides N."/>
            <person name="Lykidis A."/>
            <person name="Emerson D."/>
            <person name="Richardson P."/>
        </authorList>
    </citation>
    <scope>NUCLEOTIDE SEQUENCE [LARGE SCALE GENOMIC DNA]</scope>
    <source>
        <strain>ATCC 51168 / LMG 8142 / SP-6</strain>
    </source>
</reference>
<protein>
    <recommendedName>
        <fullName evidence="1">Adenosylhomocysteinase</fullName>
        <ecNumber evidence="1">3.13.2.1</ecNumber>
    </recommendedName>
    <alternativeName>
        <fullName evidence="1">S-adenosyl-L-homocysteine hydrolase</fullName>
        <shortName evidence="1">AdoHcyase</shortName>
    </alternativeName>
</protein>
<sequence length="477" mass="52057">MNAAVKALHENDYLVADLSLAAWGRKEIRIAETEMPGLMAIREEFAAKQPLKGARVTGSLHMTIQTAVLVETLQALGAQVRWASCNIFSTQDHAAAALAVQGTPVFAYKGETLADYWDYTHRIFEFGAAGTDGEGPNMILDDGGDATLLMHLGKRAEKDLSLLDNPKSEEETCLYAAIRAKLAVDPTWYSRKGAQIIGVTEETTTGVHRLKEMSAAGTLLFRAINVNDSVTKSKFDNLYGCRESLVDGIKRATDVMIAGKVACVAGYGDVGKGSAQALRALSAQVWVTEIDPINALQAAMEGYKVVTMEYAADKADIFVTTTGNRDVIRHEHMAAMKDQAIVCNIGHFDNEIDVASLEGYEWDEIKPQVDHIIFPDGKKIILLAKGRLVNLGCATGHPSFVMSSSFANQTIAQIELFCHPDGYDVGKVYVLPKHLDEKVARLHLKKVGAMLTELTDDQAAYIGVPKNGPYKPDTYRY</sequence>
<proteinExistence type="inferred from homology"/>
<accession>B1Y647</accession>
<name>SAHH_LEPCP</name>
<dbReference type="EC" id="3.13.2.1" evidence="1"/>
<dbReference type="EMBL" id="CP001013">
    <property type="protein sequence ID" value="ACB32394.1"/>
    <property type="molecule type" value="Genomic_DNA"/>
</dbReference>
<dbReference type="RefSeq" id="WP_012345156.1">
    <property type="nucleotide sequence ID" value="NC_010524.1"/>
</dbReference>
<dbReference type="SMR" id="B1Y647"/>
<dbReference type="STRING" id="395495.Lcho_0119"/>
<dbReference type="KEGG" id="lch:Lcho_0119"/>
<dbReference type="eggNOG" id="COG0499">
    <property type="taxonomic scope" value="Bacteria"/>
</dbReference>
<dbReference type="HOGENOM" id="CLU_025194_2_1_4"/>
<dbReference type="OrthoDB" id="9802717at2"/>
<dbReference type="UniPathway" id="UPA00314">
    <property type="reaction ID" value="UER00076"/>
</dbReference>
<dbReference type="Proteomes" id="UP000001693">
    <property type="component" value="Chromosome"/>
</dbReference>
<dbReference type="GO" id="GO:0005829">
    <property type="term" value="C:cytosol"/>
    <property type="evidence" value="ECO:0007669"/>
    <property type="project" value="TreeGrafter"/>
</dbReference>
<dbReference type="GO" id="GO:0004013">
    <property type="term" value="F:adenosylhomocysteinase activity"/>
    <property type="evidence" value="ECO:0007669"/>
    <property type="project" value="UniProtKB-UniRule"/>
</dbReference>
<dbReference type="GO" id="GO:0071269">
    <property type="term" value="P:L-homocysteine biosynthetic process"/>
    <property type="evidence" value="ECO:0007669"/>
    <property type="project" value="UniProtKB-UniRule"/>
</dbReference>
<dbReference type="GO" id="GO:0006730">
    <property type="term" value="P:one-carbon metabolic process"/>
    <property type="evidence" value="ECO:0007669"/>
    <property type="project" value="UniProtKB-KW"/>
</dbReference>
<dbReference type="GO" id="GO:0033353">
    <property type="term" value="P:S-adenosylmethionine cycle"/>
    <property type="evidence" value="ECO:0007669"/>
    <property type="project" value="TreeGrafter"/>
</dbReference>
<dbReference type="CDD" id="cd00401">
    <property type="entry name" value="SAHH"/>
    <property type="match status" value="1"/>
</dbReference>
<dbReference type="FunFam" id="3.40.50.720:FF:000004">
    <property type="entry name" value="Adenosylhomocysteinase"/>
    <property type="match status" value="1"/>
</dbReference>
<dbReference type="Gene3D" id="3.40.50.1480">
    <property type="entry name" value="Adenosylhomocysteinase-like"/>
    <property type="match status" value="1"/>
</dbReference>
<dbReference type="Gene3D" id="3.40.50.720">
    <property type="entry name" value="NAD(P)-binding Rossmann-like Domain"/>
    <property type="match status" value="1"/>
</dbReference>
<dbReference type="HAMAP" id="MF_00563">
    <property type="entry name" value="AdoHcyase"/>
    <property type="match status" value="1"/>
</dbReference>
<dbReference type="InterPro" id="IPR042172">
    <property type="entry name" value="Adenosylhomocyst_ase-like_sf"/>
</dbReference>
<dbReference type="InterPro" id="IPR000043">
    <property type="entry name" value="Adenosylhomocysteinase-like"/>
</dbReference>
<dbReference type="InterPro" id="IPR015878">
    <property type="entry name" value="Ado_hCys_hydrolase_NAD-bd"/>
</dbReference>
<dbReference type="InterPro" id="IPR036291">
    <property type="entry name" value="NAD(P)-bd_dom_sf"/>
</dbReference>
<dbReference type="InterPro" id="IPR020082">
    <property type="entry name" value="S-Ado-L-homoCys_hydrolase_CS"/>
</dbReference>
<dbReference type="NCBIfam" id="TIGR00936">
    <property type="entry name" value="ahcY"/>
    <property type="match status" value="1"/>
</dbReference>
<dbReference type="NCBIfam" id="NF004005">
    <property type="entry name" value="PRK05476.2-3"/>
    <property type="match status" value="1"/>
</dbReference>
<dbReference type="PANTHER" id="PTHR23420">
    <property type="entry name" value="ADENOSYLHOMOCYSTEINASE"/>
    <property type="match status" value="1"/>
</dbReference>
<dbReference type="PANTHER" id="PTHR23420:SF0">
    <property type="entry name" value="ADENOSYLHOMOCYSTEINASE"/>
    <property type="match status" value="1"/>
</dbReference>
<dbReference type="Pfam" id="PF05221">
    <property type="entry name" value="AdoHcyase"/>
    <property type="match status" value="1"/>
</dbReference>
<dbReference type="Pfam" id="PF00670">
    <property type="entry name" value="AdoHcyase_NAD"/>
    <property type="match status" value="1"/>
</dbReference>
<dbReference type="PIRSF" id="PIRSF001109">
    <property type="entry name" value="Ad_hcy_hydrolase"/>
    <property type="match status" value="1"/>
</dbReference>
<dbReference type="SMART" id="SM00996">
    <property type="entry name" value="AdoHcyase"/>
    <property type="match status" value="1"/>
</dbReference>
<dbReference type="SMART" id="SM00997">
    <property type="entry name" value="AdoHcyase_NAD"/>
    <property type="match status" value="1"/>
</dbReference>
<dbReference type="SUPFAM" id="SSF52283">
    <property type="entry name" value="Formate/glycerate dehydrogenase catalytic domain-like"/>
    <property type="match status" value="1"/>
</dbReference>
<dbReference type="SUPFAM" id="SSF51735">
    <property type="entry name" value="NAD(P)-binding Rossmann-fold domains"/>
    <property type="match status" value="1"/>
</dbReference>
<dbReference type="PROSITE" id="PS00738">
    <property type="entry name" value="ADOHCYASE_1"/>
    <property type="match status" value="1"/>
</dbReference>
<dbReference type="PROSITE" id="PS00739">
    <property type="entry name" value="ADOHCYASE_2"/>
    <property type="match status" value="1"/>
</dbReference>
<organism>
    <name type="scientific">Leptothrix cholodnii (strain ATCC 51168 / LMG 8142 / SP-6)</name>
    <name type="common">Leptothrix discophora (strain SP-6)</name>
    <dbReference type="NCBI Taxonomy" id="395495"/>
    <lineage>
        <taxon>Bacteria</taxon>
        <taxon>Pseudomonadati</taxon>
        <taxon>Pseudomonadota</taxon>
        <taxon>Betaproteobacteria</taxon>
        <taxon>Burkholderiales</taxon>
        <taxon>Sphaerotilaceae</taxon>
        <taxon>Leptothrix</taxon>
    </lineage>
</organism>
<evidence type="ECO:0000255" key="1">
    <source>
        <dbReference type="HAMAP-Rule" id="MF_00563"/>
    </source>
</evidence>
<comment type="function">
    <text evidence="1">May play a key role in the regulation of the intracellular concentration of adenosylhomocysteine.</text>
</comment>
<comment type="catalytic activity">
    <reaction evidence="1">
        <text>S-adenosyl-L-homocysteine + H2O = L-homocysteine + adenosine</text>
        <dbReference type="Rhea" id="RHEA:21708"/>
        <dbReference type="ChEBI" id="CHEBI:15377"/>
        <dbReference type="ChEBI" id="CHEBI:16335"/>
        <dbReference type="ChEBI" id="CHEBI:57856"/>
        <dbReference type="ChEBI" id="CHEBI:58199"/>
        <dbReference type="EC" id="3.13.2.1"/>
    </reaction>
</comment>
<comment type="cofactor">
    <cofactor evidence="1">
        <name>NAD(+)</name>
        <dbReference type="ChEBI" id="CHEBI:57540"/>
    </cofactor>
    <text evidence="1">Binds 1 NAD(+) per subunit.</text>
</comment>
<comment type="pathway">
    <text evidence="1">Amino-acid biosynthesis; L-homocysteine biosynthesis; L-homocysteine from S-adenosyl-L-homocysteine: step 1/1.</text>
</comment>
<comment type="subcellular location">
    <subcellularLocation>
        <location evidence="1">Cytoplasm</location>
    </subcellularLocation>
</comment>
<comment type="similarity">
    <text evidence="1">Belongs to the adenosylhomocysteinase family.</text>
</comment>
<gene>
    <name evidence="1" type="primary">ahcY</name>
    <name type="ordered locus">Lcho_0119</name>
</gene>